<dbReference type="EMBL" id="AF520476">
    <property type="protein sequence ID" value="AAN62852.1"/>
    <property type="molecule type" value="mRNA"/>
</dbReference>
<dbReference type="SMR" id="Q8AXA0"/>
<dbReference type="GO" id="GO:0005576">
    <property type="term" value="C:extracellular region"/>
    <property type="evidence" value="ECO:0007669"/>
    <property type="project" value="UniProtKB-SubCell"/>
</dbReference>
<dbReference type="GO" id="GO:0042612">
    <property type="term" value="C:MHC class I protein complex"/>
    <property type="evidence" value="ECO:0007669"/>
    <property type="project" value="UniProtKB-KW"/>
</dbReference>
<dbReference type="GO" id="GO:0002474">
    <property type="term" value="P:antigen processing and presentation of peptide antigen via MHC class I"/>
    <property type="evidence" value="ECO:0007669"/>
    <property type="project" value="UniProtKB-KW"/>
</dbReference>
<dbReference type="Gene3D" id="2.60.40.10">
    <property type="entry name" value="Immunoglobulins"/>
    <property type="match status" value="1"/>
</dbReference>
<dbReference type="InterPro" id="IPR007110">
    <property type="entry name" value="Ig-like_dom"/>
</dbReference>
<dbReference type="InterPro" id="IPR036179">
    <property type="entry name" value="Ig-like_dom_sf"/>
</dbReference>
<dbReference type="InterPro" id="IPR013783">
    <property type="entry name" value="Ig-like_fold"/>
</dbReference>
<dbReference type="InterPro" id="IPR003597">
    <property type="entry name" value="Ig_C1-set"/>
</dbReference>
<dbReference type="InterPro" id="IPR050160">
    <property type="entry name" value="MHC/Immunoglobulin"/>
</dbReference>
<dbReference type="PANTHER" id="PTHR19944:SF62">
    <property type="entry name" value="BETA-2-MICROGLOBULIN"/>
    <property type="match status" value="1"/>
</dbReference>
<dbReference type="PANTHER" id="PTHR19944">
    <property type="entry name" value="MHC CLASS II-RELATED"/>
    <property type="match status" value="1"/>
</dbReference>
<dbReference type="Pfam" id="PF07654">
    <property type="entry name" value="C1-set"/>
    <property type="match status" value="1"/>
</dbReference>
<dbReference type="SMART" id="SM00407">
    <property type="entry name" value="IGc1"/>
    <property type="match status" value="1"/>
</dbReference>
<dbReference type="SUPFAM" id="SSF48726">
    <property type="entry name" value="Immunoglobulin"/>
    <property type="match status" value="1"/>
</dbReference>
<dbReference type="PROSITE" id="PS50835">
    <property type="entry name" value="IG_LIKE"/>
    <property type="match status" value="1"/>
</dbReference>
<comment type="function">
    <text evidence="1">Component of the class I major histocompatibility complex (MHC). Involved in the presentation of peptide antigens to the immune system (By similarity).</text>
</comment>
<comment type="subunit">
    <text evidence="1">Heterodimer of an alpha chain and a beta chain. Beta-2-microglobulin is the beta-chain of major histocompatibility complex class I molecules (By similarity).</text>
</comment>
<comment type="subcellular location">
    <subcellularLocation>
        <location evidence="1">Secreted</location>
    </subcellularLocation>
</comment>
<comment type="similarity">
    <text evidence="3">Belongs to the beta-2-microglobulin family.</text>
</comment>
<keyword id="KW-0391">Immunity</keyword>
<keyword id="KW-0393">Immunoglobulin domain</keyword>
<keyword id="KW-0490">MHC I</keyword>
<keyword id="KW-0964">Secreted</keyword>
<keyword id="KW-0732">Signal</keyword>
<accession>Q8AXA0</accession>
<evidence type="ECO:0000250" key="1"/>
<evidence type="ECO:0000255" key="2"/>
<evidence type="ECO:0000305" key="3"/>
<reference key="1">
    <citation type="journal article" date="2002" name="Nat. Immunol.">
        <title>Identification of diversified genes that contain immunoglobulin-like variable regions in a protochordate.</title>
        <authorList>
            <person name="Cannon J.P."/>
            <person name="Haire R.N."/>
            <person name="Litman G.W."/>
        </authorList>
    </citation>
    <scope>NUCLEOTIDE SEQUENCE [MRNA]</scope>
</reference>
<protein>
    <recommendedName>
        <fullName>Beta-2-microglobulin</fullName>
    </recommendedName>
</protein>
<feature type="signal peptide" evidence="2">
    <location>
        <begin position="1"/>
        <end position="17"/>
    </location>
</feature>
<feature type="chain" id="PRO_0000018811" description="Beta-2-microglobulin">
    <location>
        <begin position="18"/>
        <end position="111"/>
    </location>
</feature>
<feature type="domain" description="Ig-like C1-type">
    <location>
        <begin position="20"/>
        <end position="111"/>
    </location>
</feature>
<proteinExistence type="inferred from homology"/>
<organism>
    <name type="scientific">Rostroraja eglanteria</name>
    <name type="common">Clearnose skate</name>
    <name type="synonym">Raja eglanteria</name>
    <dbReference type="NCBI Taxonomy" id="3360502"/>
    <lineage>
        <taxon>Eukaryota</taxon>
        <taxon>Metazoa</taxon>
        <taxon>Chordata</taxon>
        <taxon>Craniata</taxon>
        <taxon>Vertebrata</taxon>
        <taxon>Chondrichthyes</taxon>
        <taxon>Elasmobranchii</taxon>
        <taxon>Batoidea</taxon>
        <taxon>Rajiformes</taxon>
        <taxon>Rajidae</taxon>
        <taxon>Rostroraja</taxon>
    </lineage>
</organism>
<name>B2MG_ROSEG</name>
<gene>
    <name type="primary">b2m</name>
</gene>
<sequence length="111" mass="12782">MRALILLSLGLLRVAVPSPPQVVVYTYKPVVHGEKNTLLCHAKEFNPPNVELQLFEDGNVFSQANQTDLSFESNWKFKLTKFIELIPREDVEYSCHVMYMGKTSIYKLESF</sequence>